<keyword id="KW-0686">Riboflavin biosynthesis</keyword>
<keyword id="KW-0808">Transferase</keyword>
<dbReference type="EC" id="2.5.1.78" evidence="1"/>
<dbReference type="EMBL" id="CP001358">
    <property type="protein sequence ID" value="ACL49520.1"/>
    <property type="molecule type" value="Genomic_DNA"/>
</dbReference>
<dbReference type="SMR" id="B8J193"/>
<dbReference type="STRING" id="525146.Ddes_1621"/>
<dbReference type="KEGG" id="dds:Ddes_1621"/>
<dbReference type="eggNOG" id="COG0054">
    <property type="taxonomic scope" value="Bacteria"/>
</dbReference>
<dbReference type="HOGENOM" id="CLU_089358_1_1_7"/>
<dbReference type="UniPathway" id="UPA00275">
    <property type="reaction ID" value="UER00404"/>
</dbReference>
<dbReference type="GO" id="GO:0005829">
    <property type="term" value="C:cytosol"/>
    <property type="evidence" value="ECO:0007669"/>
    <property type="project" value="TreeGrafter"/>
</dbReference>
<dbReference type="GO" id="GO:0009349">
    <property type="term" value="C:riboflavin synthase complex"/>
    <property type="evidence" value="ECO:0007669"/>
    <property type="project" value="InterPro"/>
</dbReference>
<dbReference type="GO" id="GO:0000906">
    <property type="term" value="F:6,7-dimethyl-8-ribityllumazine synthase activity"/>
    <property type="evidence" value="ECO:0007669"/>
    <property type="project" value="UniProtKB-UniRule"/>
</dbReference>
<dbReference type="GO" id="GO:0009231">
    <property type="term" value="P:riboflavin biosynthetic process"/>
    <property type="evidence" value="ECO:0007669"/>
    <property type="project" value="UniProtKB-UniRule"/>
</dbReference>
<dbReference type="CDD" id="cd09209">
    <property type="entry name" value="Lumazine_synthase-I"/>
    <property type="match status" value="1"/>
</dbReference>
<dbReference type="FunFam" id="3.40.50.960:FF:000001">
    <property type="entry name" value="6,7-dimethyl-8-ribityllumazine synthase"/>
    <property type="match status" value="1"/>
</dbReference>
<dbReference type="Gene3D" id="3.40.50.960">
    <property type="entry name" value="Lumazine/riboflavin synthase"/>
    <property type="match status" value="1"/>
</dbReference>
<dbReference type="HAMAP" id="MF_00178">
    <property type="entry name" value="Lumazine_synth"/>
    <property type="match status" value="1"/>
</dbReference>
<dbReference type="InterPro" id="IPR034964">
    <property type="entry name" value="LS"/>
</dbReference>
<dbReference type="InterPro" id="IPR002180">
    <property type="entry name" value="LS/RS"/>
</dbReference>
<dbReference type="InterPro" id="IPR036467">
    <property type="entry name" value="LS/RS_sf"/>
</dbReference>
<dbReference type="NCBIfam" id="TIGR00114">
    <property type="entry name" value="lumazine-synth"/>
    <property type="match status" value="1"/>
</dbReference>
<dbReference type="NCBIfam" id="NF000812">
    <property type="entry name" value="PRK00061.1-4"/>
    <property type="match status" value="1"/>
</dbReference>
<dbReference type="PANTHER" id="PTHR21058:SF0">
    <property type="entry name" value="6,7-DIMETHYL-8-RIBITYLLUMAZINE SYNTHASE"/>
    <property type="match status" value="1"/>
</dbReference>
<dbReference type="PANTHER" id="PTHR21058">
    <property type="entry name" value="6,7-DIMETHYL-8-RIBITYLLUMAZINE SYNTHASE DMRL SYNTHASE LUMAZINE SYNTHASE"/>
    <property type="match status" value="1"/>
</dbReference>
<dbReference type="Pfam" id="PF00885">
    <property type="entry name" value="DMRL_synthase"/>
    <property type="match status" value="1"/>
</dbReference>
<dbReference type="SUPFAM" id="SSF52121">
    <property type="entry name" value="Lumazine synthase"/>
    <property type="match status" value="1"/>
</dbReference>
<sequence>MSTVKTIAGQLDAKGLKVAVVATRFNDFIVDRLVGGALDYLERHGLDMENVTMVRIPGAFEMPLVCQKLAASGKYDGILALGAVIRGGTPHFDYVCAEASKGIAQAMLQHSMPVGFGLLTCDNIEQAIERAGSKAGNKGVEAAAAMLETIRVMEQL</sequence>
<reference key="1">
    <citation type="submission" date="2009-01" db="EMBL/GenBank/DDBJ databases">
        <title>Complete sequence of Desulfovibrio desulfuricans subsp. desulfuricans str. ATCC 27774.</title>
        <authorList>
            <consortium name="US DOE Joint Genome Institute"/>
            <person name="Lucas S."/>
            <person name="Copeland A."/>
            <person name="Lapidus A."/>
            <person name="Glavina del Rio T."/>
            <person name="Tice H."/>
            <person name="Bruce D."/>
            <person name="Goodwin L."/>
            <person name="Pitluck S."/>
            <person name="Sims D."/>
            <person name="Lu M."/>
            <person name="Kiss H."/>
            <person name="Meineke L."/>
            <person name="Brettin T."/>
            <person name="Detter J.C."/>
            <person name="Han C."/>
            <person name="Larimer F."/>
            <person name="Land M."/>
            <person name="Hauser L."/>
            <person name="Kyrpides N."/>
            <person name="Ovchinnikova G."/>
            <person name="Hazen T.C."/>
        </authorList>
    </citation>
    <scope>NUCLEOTIDE SEQUENCE [LARGE SCALE GENOMIC DNA]</scope>
    <source>
        <strain>ATCC 27774 / DSM 6949 / MB</strain>
    </source>
</reference>
<proteinExistence type="inferred from homology"/>
<name>RISB_DESDA</name>
<accession>B8J193</accession>
<evidence type="ECO:0000255" key="1">
    <source>
        <dbReference type="HAMAP-Rule" id="MF_00178"/>
    </source>
</evidence>
<protein>
    <recommendedName>
        <fullName evidence="1">6,7-dimethyl-8-ribityllumazine synthase</fullName>
        <shortName evidence="1">DMRL synthase</shortName>
        <shortName evidence="1">LS</shortName>
        <shortName evidence="1">Lumazine synthase</shortName>
        <ecNumber evidence="1">2.5.1.78</ecNumber>
    </recommendedName>
</protein>
<feature type="chain" id="PRO_1000195479" description="6,7-dimethyl-8-ribityllumazine synthase">
    <location>
        <begin position="1"/>
        <end position="156"/>
    </location>
</feature>
<feature type="active site" description="Proton donor" evidence="1">
    <location>
        <position position="91"/>
    </location>
</feature>
<feature type="binding site" evidence="1">
    <location>
        <position position="25"/>
    </location>
    <ligand>
        <name>5-amino-6-(D-ribitylamino)uracil</name>
        <dbReference type="ChEBI" id="CHEBI:15934"/>
    </ligand>
</feature>
<feature type="binding site" evidence="1">
    <location>
        <begin position="59"/>
        <end position="61"/>
    </location>
    <ligand>
        <name>5-amino-6-(D-ribitylamino)uracil</name>
        <dbReference type="ChEBI" id="CHEBI:15934"/>
    </ligand>
</feature>
<feature type="binding site" evidence="1">
    <location>
        <begin position="83"/>
        <end position="85"/>
    </location>
    <ligand>
        <name>5-amino-6-(D-ribitylamino)uracil</name>
        <dbReference type="ChEBI" id="CHEBI:15934"/>
    </ligand>
</feature>
<feature type="binding site" evidence="1">
    <location>
        <begin position="88"/>
        <end position="89"/>
    </location>
    <ligand>
        <name>(2S)-2-hydroxy-3-oxobutyl phosphate</name>
        <dbReference type="ChEBI" id="CHEBI:58830"/>
    </ligand>
</feature>
<feature type="binding site" evidence="1">
    <location>
        <position position="116"/>
    </location>
    <ligand>
        <name>5-amino-6-(D-ribitylamino)uracil</name>
        <dbReference type="ChEBI" id="CHEBI:15934"/>
    </ligand>
</feature>
<feature type="binding site" evidence="1">
    <location>
        <position position="130"/>
    </location>
    <ligand>
        <name>(2S)-2-hydroxy-3-oxobutyl phosphate</name>
        <dbReference type="ChEBI" id="CHEBI:58830"/>
    </ligand>
</feature>
<organism>
    <name type="scientific">Desulfovibrio desulfuricans (strain ATCC 27774 / DSM 6949 / MB)</name>
    <dbReference type="NCBI Taxonomy" id="525146"/>
    <lineage>
        <taxon>Bacteria</taxon>
        <taxon>Pseudomonadati</taxon>
        <taxon>Thermodesulfobacteriota</taxon>
        <taxon>Desulfovibrionia</taxon>
        <taxon>Desulfovibrionales</taxon>
        <taxon>Desulfovibrionaceae</taxon>
        <taxon>Desulfovibrio</taxon>
    </lineage>
</organism>
<comment type="function">
    <text evidence="1">Catalyzes the formation of 6,7-dimethyl-8-ribityllumazine by condensation of 5-amino-6-(D-ribitylamino)uracil with 3,4-dihydroxy-2-butanone 4-phosphate. This is the penultimate step in the biosynthesis of riboflavin.</text>
</comment>
<comment type="catalytic activity">
    <reaction evidence="1">
        <text>(2S)-2-hydroxy-3-oxobutyl phosphate + 5-amino-6-(D-ribitylamino)uracil = 6,7-dimethyl-8-(1-D-ribityl)lumazine + phosphate + 2 H2O + H(+)</text>
        <dbReference type="Rhea" id="RHEA:26152"/>
        <dbReference type="ChEBI" id="CHEBI:15377"/>
        <dbReference type="ChEBI" id="CHEBI:15378"/>
        <dbReference type="ChEBI" id="CHEBI:15934"/>
        <dbReference type="ChEBI" id="CHEBI:43474"/>
        <dbReference type="ChEBI" id="CHEBI:58201"/>
        <dbReference type="ChEBI" id="CHEBI:58830"/>
        <dbReference type="EC" id="2.5.1.78"/>
    </reaction>
</comment>
<comment type="pathway">
    <text evidence="1">Cofactor biosynthesis; riboflavin biosynthesis; riboflavin from 2-hydroxy-3-oxobutyl phosphate and 5-amino-6-(D-ribitylamino)uracil: step 1/2.</text>
</comment>
<comment type="similarity">
    <text evidence="1">Belongs to the DMRL synthase family.</text>
</comment>
<gene>
    <name evidence="1" type="primary">ribH</name>
    <name type="ordered locus">Ddes_1621</name>
</gene>